<keyword id="KW-0472">Membrane</keyword>
<keyword id="KW-1185">Reference proteome</keyword>
<keyword id="KW-0812">Transmembrane</keyword>
<keyword id="KW-1133">Transmembrane helix</keyword>
<comment type="subcellular location">
    <subcellularLocation>
        <location evidence="2">Membrane</location>
        <topology evidence="2">Single-pass membrane protein</topology>
    </subcellularLocation>
</comment>
<proteinExistence type="predicted"/>
<dbReference type="EMBL" id="AB001488">
    <property type="protein sequence ID" value="BAA19335.1"/>
    <property type="molecule type" value="Genomic_DNA"/>
</dbReference>
<dbReference type="EMBL" id="AL009126">
    <property type="protein sequence ID" value="CAB12305.1"/>
    <property type="molecule type" value="Genomic_DNA"/>
</dbReference>
<dbReference type="PIR" id="B69776">
    <property type="entry name" value="B69776"/>
</dbReference>
<dbReference type="RefSeq" id="NP_388379.1">
    <property type="nucleotide sequence ID" value="NC_000964.3"/>
</dbReference>
<dbReference type="RefSeq" id="WP_009966634.1">
    <property type="nucleotide sequence ID" value="NZ_OZ025638.1"/>
</dbReference>
<dbReference type="SMR" id="P96646"/>
<dbReference type="FunCoup" id="P96646">
    <property type="interactions" value="39"/>
</dbReference>
<dbReference type="STRING" id="224308.BSU04980"/>
<dbReference type="PaxDb" id="224308-BSU04980"/>
<dbReference type="DNASU" id="939919"/>
<dbReference type="EnsemblBacteria" id="CAB12305">
    <property type="protein sequence ID" value="CAB12305"/>
    <property type="gene ID" value="BSU_04980"/>
</dbReference>
<dbReference type="GeneID" id="939919"/>
<dbReference type="KEGG" id="bsu:BSU04980"/>
<dbReference type="PATRIC" id="fig|224308.179.peg.529"/>
<dbReference type="eggNOG" id="ENOG502ZMR5">
    <property type="taxonomic scope" value="Bacteria"/>
</dbReference>
<dbReference type="InParanoid" id="P96646"/>
<dbReference type="OrthoDB" id="2939043at2"/>
<dbReference type="BioCyc" id="BSUB:BSU04980-MONOMER"/>
<dbReference type="Proteomes" id="UP000001570">
    <property type="component" value="Chromosome"/>
</dbReference>
<dbReference type="GO" id="GO:0016020">
    <property type="term" value="C:membrane"/>
    <property type="evidence" value="ECO:0007669"/>
    <property type="project" value="UniProtKB-SubCell"/>
</dbReference>
<feature type="chain" id="PRO_0000049498" description="Uncharacterized protein YddI">
    <location>
        <begin position="1"/>
        <end position="168"/>
    </location>
</feature>
<feature type="transmembrane region" description="Helical" evidence="1">
    <location>
        <begin position="5"/>
        <end position="24"/>
    </location>
</feature>
<protein>
    <recommendedName>
        <fullName>Uncharacterized protein YddI</fullName>
    </recommendedName>
</protein>
<gene>
    <name type="primary">yddI</name>
    <name type="ordered locus">BSU04980</name>
</gene>
<accession>P96646</accession>
<sequence length="168" mass="19005">MKTHIAWASACLLLVMLTGFFTIGQQTYKIEKLKDKNEVLSEKIKELNHIESTSSASENKAFFEAFFNYSDIDIRYETVKKHTTGKGFDYAFPSRSDQKHTVSVQSELLSLESYSKPLDESHELFLNIVEVATTANSVTTNQVLIVQTTMKKEKDGWLVDNVQVKGNG</sequence>
<evidence type="ECO:0000255" key="1"/>
<evidence type="ECO:0000305" key="2"/>
<name>YDDI_BACSU</name>
<organism>
    <name type="scientific">Bacillus subtilis (strain 168)</name>
    <dbReference type="NCBI Taxonomy" id="224308"/>
    <lineage>
        <taxon>Bacteria</taxon>
        <taxon>Bacillati</taxon>
        <taxon>Bacillota</taxon>
        <taxon>Bacilli</taxon>
        <taxon>Bacillales</taxon>
        <taxon>Bacillaceae</taxon>
        <taxon>Bacillus</taxon>
    </lineage>
</organism>
<reference key="1">
    <citation type="submission" date="1997-03" db="EMBL/GenBank/DDBJ databases">
        <title>A 148 kbp sequence of the region between 35 and 47 degree of the Bacillus subtilis genome.</title>
        <authorList>
            <person name="Kasahara Y."/>
            <person name="Nakai S."/>
            <person name="Lee S."/>
            <person name="Sadaie Y."/>
            <person name="Ogasawara N."/>
        </authorList>
    </citation>
    <scope>NUCLEOTIDE SEQUENCE [GENOMIC DNA]</scope>
    <source>
        <strain>168</strain>
    </source>
</reference>
<reference key="2">
    <citation type="journal article" date="1997" name="Nature">
        <title>The complete genome sequence of the Gram-positive bacterium Bacillus subtilis.</title>
        <authorList>
            <person name="Kunst F."/>
            <person name="Ogasawara N."/>
            <person name="Moszer I."/>
            <person name="Albertini A.M."/>
            <person name="Alloni G."/>
            <person name="Azevedo V."/>
            <person name="Bertero M.G."/>
            <person name="Bessieres P."/>
            <person name="Bolotin A."/>
            <person name="Borchert S."/>
            <person name="Borriss R."/>
            <person name="Boursier L."/>
            <person name="Brans A."/>
            <person name="Braun M."/>
            <person name="Brignell S.C."/>
            <person name="Bron S."/>
            <person name="Brouillet S."/>
            <person name="Bruschi C.V."/>
            <person name="Caldwell B."/>
            <person name="Capuano V."/>
            <person name="Carter N.M."/>
            <person name="Choi S.-K."/>
            <person name="Codani J.-J."/>
            <person name="Connerton I.F."/>
            <person name="Cummings N.J."/>
            <person name="Daniel R.A."/>
            <person name="Denizot F."/>
            <person name="Devine K.M."/>
            <person name="Duesterhoeft A."/>
            <person name="Ehrlich S.D."/>
            <person name="Emmerson P.T."/>
            <person name="Entian K.-D."/>
            <person name="Errington J."/>
            <person name="Fabret C."/>
            <person name="Ferrari E."/>
            <person name="Foulger D."/>
            <person name="Fritz C."/>
            <person name="Fujita M."/>
            <person name="Fujita Y."/>
            <person name="Fuma S."/>
            <person name="Galizzi A."/>
            <person name="Galleron N."/>
            <person name="Ghim S.-Y."/>
            <person name="Glaser P."/>
            <person name="Goffeau A."/>
            <person name="Golightly E.J."/>
            <person name="Grandi G."/>
            <person name="Guiseppi G."/>
            <person name="Guy B.J."/>
            <person name="Haga K."/>
            <person name="Haiech J."/>
            <person name="Harwood C.R."/>
            <person name="Henaut A."/>
            <person name="Hilbert H."/>
            <person name="Holsappel S."/>
            <person name="Hosono S."/>
            <person name="Hullo M.-F."/>
            <person name="Itaya M."/>
            <person name="Jones L.-M."/>
            <person name="Joris B."/>
            <person name="Karamata D."/>
            <person name="Kasahara Y."/>
            <person name="Klaerr-Blanchard M."/>
            <person name="Klein C."/>
            <person name="Kobayashi Y."/>
            <person name="Koetter P."/>
            <person name="Koningstein G."/>
            <person name="Krogh S."/>
            <person name="Kumano M."/>
            <person name="Kurita K."/>
            <person name="Lapidus A."/>
            <person name="Lardinois S."/>
            <person name="Lauber J."/>
            <person name="Lazarevic V."/>
            <person name="Lee S.-M."/>
            <person name="Levine A."/>
            <person name="Liu H."/>
            <person name="Masuda S."/>
            <person name="Mauel C."/>
            <person name="Medigue C."/>
            <person name="Medina N."/>
            <person name="Mellado R.P."/>
            <person name="Mizuno M."/>
            <person name="Moestl D."/>
            <person name="Nakai S."/>
            <person name="Noback M."/>
            <person name="Noone D."/>
            <person name="O'Reilly M."/>
            <person name="Ogawa K."/>
            <person name="Ogiwara A."/>
            <person name="Oudega B."/>
            <person name="Park S.-H."/>
            <person name="Parro V."/>
            <person name="Pohl T.M."/>
            <person name="Portetelle D."/>
            <person name="Porwollik S."/>
            <person name="Prescott A.M."/>
            <person name="Presecan E."/>
            <person name="Pujic P."/>
            <person name="Purnelle B."/>
            <person name="Rapoport G."/>
            <person name="Rey M."/>
            <person name="Reynolds S."/>
            <person name="Rieger M."/>
            <person name="Rivolta C."/>
            <person name="Rocha E."/>
            <person name="Roche B."/>
            <person name="Rose M."/>
            <person name="Sadaie Y."/>
            <person name="Sato T."/>
            <person name="Scanlan E."/>
            <person name="Schleich S."/>
            <person name="Schroeter R."/>
            <person name="Scoffone F."/>
            <person name="Sekiguchi J."/>
            <person name="Sekowska A."/>
            <person name="Seror S.J."/>
            <person name="Serror P."/>
            <person name="Shin B.-S."/>
            <person name="Soldo B."/>
            <person name="Sorokin A."/>
            <person name="Tacconi E."/>
            <person name="Takagi T."/>
            <person name="Takahashi H."/>
            <person name="Takemaru K."/>
            <person name="Takeuchi M."/>
            <person name="Tamakoshi A."/>
            <person name="Tanaka T."/>
            <person name="Terpstra P."/>
            <person name="Tognoni A."/>
            <person name="Tosato V."/>
            <person name="Uchiyama S."/>
            <person name="Vandenbol M."/>
            <person name="Vannier F."/>
            <person name="Vassarotti A."/>
            <person name="Viari A."/>
            <person name="Wambutt R."/>
            <person name="Wedler E."/>
            <person name="Wedler H."/>
            <person name="Weitzenegger T."/>
            <person name="Winters P."/>
            <person name="Wipat A."/>
            <person name="Yamamoto H."/>
            <person name="Yamane K."/>
            <person name="Yasumoto K."/>
            <person name="Yata K."/>
            <person name="Yoshida K."/>
            <person name="Yoshikawa H.-F."/>
            <person name="Zumstein E."/>
            <person name="Yoshikawa H."/>
            <person name="Danchin A."/>
        </authorList>
    </citation>
    <scope>NUCLEOTIDE SEQUENCE [LARGE SCALE GENOMIC DNA]</scope>
    <source>
        <strain>168</strain>
    </source>
</reference>